<gene>
    <name type="primary">HSP21</name>
    <name type="synonym">TOM111</name>
</gene>
<dbReference type="EMBL" id="U66300">
    <property type="protein sequence ID" value="AAB07023.1"/>
    <property type="molecule type" value="mRNA"/>
</dbReference>
<dbReference type="PIR" id="T06324">
    <property type="entry name" value="T06324"/>
</dbReference>
<dbReference type="RefSeq" id="NP_001233900.1">
    <property type="nucleotide sequence ID" value="NM_001246971.2"/>
</dbReference>
<dbReference type="SMR" id="Q95661"/>
<dbReference type="FunCoup" id="Q95661">
    <property type="interactions" value="52"/>
</dbReference>
<dbReference type="STRING" id="4081.Q95661"/>
<dbReference type="PaxDb" id="4081-Solyc03g082420.2.1"/>
<dbReference type="EnsemblPlants" id="Solyc03g082420.3.1">
    <property type="protein sequence ID" value="Solyc03g082420.3.1"/>
    <property type="gene ID" value="Solyc03g082420.3"/>
</dbReference>
<dbReference type="GeneID" id="544024"/>
<dbReference type="Gramene" id="Solyc03g082420.3.1">
    <property type="protein sequence ID" value="Solyc03g082420.3.1"/>
    <property type="gene ID" value="Solyc03g082420.3"/>
</dbReference>
<dbReference type="KEGG" id="sly:544024"/>
<dbReference type="eggNOG" id="KOG0710">
    <property type="taxonomic scope" value="Eukaryota"/>
</dbReference>
<dbReference type="HOGENOM" id="CLU_046737_3_0_1"/>
<dbReference type="InParanoid" id="Q95661"/>
<dbReference type="OMA" id="TMRQMMD"/>
<dbReference type="OrthoDB" id="1431247at2759"/>
<dbReference type="PhylomeDB" id="Q95661"/>
<dbReference type="Proteomes" id="UP000004994">
    <property type="component" value="Chromosome 3"/>
</dbReference>
<dbReference type="ExpressionAtlas" id="Q95661">
    <property type="expression patterns" value="baseline and differential"/>
</dbReference>
<dbReference type="GO" id="GO:0009507">
    <property type="term" value="C:chloroplast"/>
    <property type="evidence" value="ECO:0007669"/>
    <property type="project" value="UniProtKB-SubCell"/>
</dbReference>
<dbReference type="GO" id="GO:0009408">
    <property type="term" value="P:response to heat"/>
    <property type="evidence" value="ECO:0007669"/>
    <property type="project" value="InterPro"/>
</dbReference>
<dbReference type="CDD" id="cd06464">
    <property type="entry name" value="ACD_sHsps-like"/>
    <property type="match status" value="1"/>
</dbReference>
<dbReference type="FunFam" id="2.60.40.790:FF:000059">
    <property type="entry name" value="26.5 kDa heat shock protein, mitochondrial"/>
    <property type="match status" value="1"/>
</dbReference>
<dbReference type="Gene3D" id="2.60.40.790">
    <property type="match status" value="1"/>
</dbReference>
<dbReference type="InterPro" id="IPR002068">
    <property type="entry name" value="A-crystallin/Hsp20_dom"/>
</dbReference>
<dbReference type="InterPro" id="IPR008978">
    <property type="entry name" value="HSP20-like_chaperone"/>
</dbReference>
<dbReference type="InterPro" id="IPR044587">
    <property type="entry name" value="HSP21-like"/>
</dbReference>
<dbReference type="PANTHER" id="PTHR46733">
    <property type="entry name" value="26.5 KDA HEAT SHOCK PROTEIN, MITOCHONDRIAL"/>
    <property type="match status" value="1"/>
</dbReference>
<dbReference type="PANTHER" id="PTHR46733:SF4">
    <property type="entry name" value="HEAT SHOCK PROTEIN 21, CHLOROPLASTIC"/>
    <property type="match status" value="1"/>
</dbReference>
<dbReference type="Pfam" id="PF00011">
    <property type="entry name" value="HSP20"/>
    <property type="match status" value="1"/>
</dbReference>
<dbReference type="SUPFAM" id="SSF49764">
    <property type="entry name" value="HSP20-like chaperones"/>
    <property type="match status" value="1"/>
</dbReference>
<dbReference type="PROSITE" id="PS01031">
    <property type="entry name" value="SHSP"/>
    <property type="match status" value="1"/>
</dbReference>
<proteinExistence type="evidence at transcript level"/>
<feature type="transit peptide" description="Chloroplast" evidence="1">
    <location>
        <begin position="1"/>
        <end status="unknown"/>
    </location>
</feature>
<feature type="chain" id="PRO_0000013531" description="Small heat shock protein, chloroplastic">
    <location>
        <begin status="unknown"/>
        <end position="235"/>
    </location>
</feature>
<feature type="domain" description="sHSP" evidence="2">
    <location>
        <begin position="126"/>
        <end position="235"/>
    </location>
</feature>
<feature type="region of interest" description="Disordered" evidence="3">
    <location>
        <begin position="1"/>
        <end position="23"/>
    </location>
</feature>
<feature type="region of interest" description="Disordered" evidence="3">
    <location>
        <begin position="51"/>
        <end position="80"/>
    </location>
</feature>
<feature type="compositionally biased region" description="Basic and acidic residues" evidence="3">
    <location>
        <begin position="52"/>
        <end position="63"/>
    </location>
</feature>
<feature type="compositionally biased region" description="Polar residues" evidence="3">
    <location>
        <begin position="64"/>
        <end position="74"/>
    </location>
</feature>
<keyword id="KW-0150">Chloroplast</keyword>
<keyword id="KW-0934">Plastid</keyword>
<keyword id="KW-1185">Reference proteome</keyword>
<keyword id="KW-0346">Stress response</keyword>
<keyword id="KW-0809">Transit peptide</keyword>
<comment type="subcellular location">
    <subcellularLocation>
        <location>Plastid</location>
        <location>Chloroplast</location>
    </subcellularLocation>
</comment>
<comment type="tissue specificity">
    <text>In fruits, flowers, leaves, and stems.</text>
</comment>
<comment type="induction">
    <text>By high temperature but not by drought or anaerobic conditions.</text>
</comment>
<comment type="similarity">
    <text evidence="2">Belongs to the small heat shock protein (HSP20) family.</text>
</comment>
<accession>Q95661</accession>
<sequence length="235" mass="26227">MAYTSLTSSPLVSNVSVGGTSKINNNKVSAPCSVFVPSMRRPTTRLVARATGDNKDTSVDVHHSSAQGGNNQGTAVERRPTRMALDVSPFGVLDPMSPMRTMRQMIDTMDRLFEDTMTFPGRNRASGTGEIRTPWDIHDDENEIKMRFDMPGLSKEDVKVSVENDMLVIKGEHKKEEDGRDKHSWGRNYSSYDTRLSLPDNVVKDKIKAELKNGVLFISIPKTEVEKKVIDVQIN</sequence>
<protein>
    <recommendedName>
        <fullName>Small heat shock protein, chloroplastic</fullName>
    </recommendedName>
</protein>
<reference key="1">
    <citation type="journal article" date="1998" name="Plant Physiol.">
        <title>Expression of small heat-shock proteins at low temperatures. A possible role in protecting against chilling injuries.</title>
        <authorList>
            <person name="Sabehat A."/>
            <person name="Lurie S."/>
            <person name="Weiss D."/>
        </authorList>
    </citation>
    <scope>NUCLEOTIDE SEQUENCE [MRNA]</scope>
</reference>
<name>HS21C_SOLLC</name>
<organism>
    <name type="scientific">Solanum lycopersicum</name>
    <name type="common">Tomato</name>
    <name type="synonym">Lycopersicon esculentum</name>
    <dbReference type="NCBI Taxonomy" id="4081"/>
    <lineage>
        <taxon>Eukaryota</taxon>
        <taxon>Viridiplantae</taxon>
        <taxon>Streptophyta</taxon>
        <taxon>Embryophyta</taxon>
        <taxon>Tracheophyta</taxon>
        <taxon>Spermatophyta</taxon>
        <taxon>Magnoliopsida</taxon>
        <taxon>eudicotyledons</taxon>
        <taxon>Gunneridae</taxon>
        <taxon>Pentapetalae</taxon>
        <taxon>asterids</taxon>
        <taxon>lamiids</taxon>
        <taxon>Solanales</taxon>
        <taxon>Solanaceae</taxon>
        <taxon>Solanoideae</taxon>
        <taxon>Solaneae</taxon>
        <taxon>Solanum</taxon>
        <taxon>Solanum subgen. Lycopersicon</taxon>
    </lineage>
</organism>
<evidence type="ECO:0000255" key="1"/>
<evidence type="ECO:0000255" key="2">
    <source>
        <dbReference type="PROSITE-ProRule" id="PRU00285"/>
    </source>
</evidence>
<evidence type="ECO:0000256" key="3">
    <source>
        <dbReference type="SAM" id="MobiDB-lite"/>
    </source>
</evidence>